<evidence type="ECO:0000255" key="1">
    <source>
        <dbReference type="HAMAP-Rule" id="MF_00358"/>
    </source>
</evidence>
<evidence type="ECO:0000305" key="2"/>
<name>RS21_BACC2</name>
<dbReference type="EMBL" id="CP001186">
    <property type="protein sequence ID" value="ACK96413.1"/>
    <property type="molecule type" value="Genomic_DNA"/>
</dbReference>
<dbReference type="RefSeq" id="WP_000048061.1">
    <property type="nucleotide sequence ID" value="NC_011772.1"/>
</dbReference>
<dbReference type="SMR" id="B7IYG2"/>
<dbReference type="GeneID" id="93006791"/>
<dbReference type="KEGG" id="bcg:BCG9842_B0808"/>
<dbReference type="HOGENOM" id="CLU_159258_3_2_9"/>
<dbReference type="Proteomes" id="UP000006744">
    <property type="component" value="Chromosome"/>
</dbReference>
<dbReference type="GO" id="GO:1990904">
    <property type="term" value="C:ribonucleoprotein complex"/>
    <property type="evidence" value="ECO:0007669"/>
    <property type="project" value="UniProtKB-KW"/>
</dbReference>
<dbReference type="GO" id="GO:0005840">
    <property type="term" value="C:ribosome"/>
    <property type="evidence" value="ECO:0007669"/>
    <property type="project" value="UniProtKB-KW"/>
</dbReference>
<dbReference type="GO" id="GO:0003735">
    <property type="term" value="F:structural constituent of ribosome"/>
    <property type="evidence" value="ECO:0007669"/>
    <property type="project" value="InterPro"/>
</dbReference>
<dbReference type="GO" id="GO:0006412">
    <property type="term" value="P:translation"/>
    <property type="evidence" value="ECO:0007669"/>
    <property type="project" value="UniProtKB-UniRule"/>
</dbReference>
<dbReference type="Gene3D" id="1.20.5.1150">
    <property type="entry name" value="Ribosomal protein S8"/>
    <property type="match status" value="1"/>
</dbReference>
<dbReference type="HAMAP" id="MF_00358">
    <property type="entry name" value="Ribosomal_bS21"/>
    <property type="match status" value="1"/>
</dbReference>
<dbReference type="InterPro" id="IPR001911">
    <property type="entry name" value="Ribosomal_bS21"/>
</dbReference>
<dbReference type="InterPro" id="IPR018278">
    <property type="entry name" value="Ribosomal_bS21_CS"/>
</dbReference>
<dbReference type="InterPro" id="IPR038380">
    <property type="entry name" value="Ribosomal_bS21_sf"/>
</dbReference>
<dbReference type="NCBIfam" id="TIGR00030">
    <property type="entry name" value="S21p"/>
    <property type="match status" value="1"/>
</dbReference>
<dbReference type="PANTHER" id="PTHR21109">
    <property type="entry name" value="MITOCHONDRIAL 28S RIBOSOMAL PROTEIN S21"/>
    <property type="match status" value="1"/>
</dbReference>
<dbReference type="PANTHER" id="PTHR21109:SF22">
    <property type="entry name" value="SMALL RIBOSOMAL SUBUNIT PROTEIN BS21"/>
    <property type="match status" value="1"/>
</dbReference>
<dbReference type="Pfam" id="PF01165">
    <property type="entry name" value="Ribosomal_S21"/>
    <property type="match status" value="1"/>
</dbReference>
<dbReference type="PRINTS" id="PR00976">
    <property type="entry name" value="RIBOSOMALS21"/>
</dbReference>
<dbReference type="PROSITE" id="PS01181">
    <property type="entry name" value="RIBOSOMAL_S21"/>
    <property type="match status" value="1"/>
</dbReference>
<organism>
    <name type="scientific">Bacillus cereus (strain G9842)</name>
    <dbReference type="NCBI Taxonomy" id="405531"/>
    <lineage>
        <taxon>Bacteria</taxon>
        <taxon>Bacillati</taxon>
        <taxon>Bacillota</taxon>
        <taxon>Bacilli</taxon>
        <taxon>Bacillales</taxon>
        <taxon>Bacillaceae</taxon>
        <taxon>Bacillus</taxon>
        <taxon>Bacillus cereus group</taxon>
    </lineage>
</organism>
<reference key="1">
    <citation type="submission" date="2008-10" db="EMBL/GenBank/DDBJ databases">
        <title>Genome sequence of Bacillus cereus G9842.</title>
        <authorList>
            <person name="Dodson R.J."/>
            <person name="Durkin A.S."/>
            <person name="Rosovitz M.J."/>
            <person name="Rasko D.A."/>
            <person name="Hoffmaster A."/>
            <person name="Ravel J."/>
            <person name="Sutton G."/>
        </authorList>
    </citation>
    <scope>NUCLEOTIDE SEQUENCE [LARGE SCALE GENOMIC DNA]</scope>
    <source>
        <strain>G9842</strain>
    </source>
</reference>
<sequence>MSKTVVRKNESLEDALRRFKRSVSKTGTLAEARKREFYEKPSVKRKKKSEAARKRKF</sequence>
<protein>
    <recommendedName>
        <fullName evidence="1">Small ribosomal subunit protein bS21</fullName>
    </recommendedName>
    <alternativeName>
        <fullName evidence="2">30S ribosomal protein S21</fullName>
    </alternativeName>
</protein>
<feature type="chain" id="PRO_1000120585" description="Small ribosomal subunit protein bS21">
    <location>
        <begin position="1"/>
        <end position="57"/>
    </location>
</feature>
<accession>B7IYG2</accession>
<comment type="similarity">
    <text evidence="1">Belongs to the bacterial ribosomal protein bS21 family.</text>
</comment>
<proteinExistence type="inferred from homology"/>
<keyword id="KW-0687">Ribonucleoprotein</keyword>
<keyword id="KW-0689">Ribosomal protein</keyword>
<gene>
    <name evidence="1" type="primary">rpsU</name>
    <name type="ordered locus">BCG9842_B0808</name>
</gene>